<comment type="function">
    <text evidence="2">Accessory subunit of the mitochondrial membrane respiratory chain NADH dehydrogenase (Complex I), that is believed not to be involved in catalysis. Complex I functions in the transfer of electrons from NADH to the respiratory chain. The immediate electron acceptor for the enzyme is believed to be ubiquinone.</text>
</comment>
<comment type="cofactor">
    <cofactor evidence="1">
        <name>FAD</name>
        <dbReference type="ChEBI" id="CHEBI:57692"/>
    </cofactor>
    <text evidence="1">Binds 1 FAD per subunit.</text>
</comment>
<comment type="subunit">
    <text evidence="2 3">Complex I is composed of 45 different subunits (By similarity). This a component of the hydrophobic protein fraction (By similarity). Interacts with BLOC1S1 (By similarity). Interacts with SLC2A4 (By similarity). Interacts with CLOCK (By similarity). Interacts with RAB5IF (By similarity).</text>
</comment>
<comment type="subcellular location">
    <subcellularLocation>
        <location evidence="2">Mitochondrion matrix</location>
    </subcellularLocation>
</comment>
<comment type="PTM">
    <text evidence="2">Acetylated on lysine residues. BLOC1S1 is required for acetylation. Acetylated by CLOCK in a circadian manner.</text>
</comment>
<comment type="similarity">
    <text evidence="5">Belongs to the complex I NDUFA9 subunit family.</text>
</comment>
<feature type="transit peptide" description="Mitochondrion" evidence="1">
    <location>
        <begin position="1"/>
        <end position="35"/>
    </location>
</feature>
<feature type="chain" id="PRO_0000251811" description="NADH dehydrogenase [ubiquinone] 1 alpha subcomplex subunit 9, mitochondrial">
    <location>
        <begin position="36"/>
        <end position="377"/>
    </location>
</feature>
<feature type="modified residue" description="N6-succinyllysine" evidence="4">
    <location>
        <position position="175"/>
    </location>
</feature>
<feature type="modified residue" description="N6-acetyllysine" evidence="4">
    <location>
        <position position="189"/>
    </location>
</feature>
<feature type="modified residue" description="N6-acetyllysine" evidence="4">
    <location>
        <position position="370"/>
    </location>
</feature>
<dbReference type="EMBL" id="DQ885720">
    <property type="protein sequence ID" value="ABH12229.1"/>
    <property type="molecule type" value="mRNA"/>
</dbReference>
<dbReference type="RefSeq" id="NP_001073383.1">
    <property type="nucleotide sequence ID" value="NM_001079914.1"/>
</dbReference>
<dbReference type="SMR" id="Q0MQB4"/>
<dbReference type="FunCoup" id="Q0MQB4">
    <property type="interactions" value="2471"/>
</dbReference>
<dbReference type="STRING" id="9598.ENSPTRP00000007791"/>
<dbReference type="PaxDb" id="9598-ENSPTRP00000007791"/>
<dbReference type="Ensembl" id="ENSPTRT00000008433.6">
    <property type="protein sequence ID" value="ENSPTRP00000007791.6"/>
    <property type="gene ID" value="ENSPTRG00000004557.6"/>
</dbReference>
<dbReference type="GeneID" id="451766"/>
<dbReference type="KEGG" id="ptr:451766"/>
<dbReference type="CTD" id="4704"/>
<dbReference type="VGNC" id="VGNC:13331">
    <property type="gene designation" value="NDUFA9"/>
</dbReference>
<dbReference type="eggNOG" id="KOG2865">
    <property type="taxonomic scope" value="Eukaryota"/>
</dbReference>
<dbReference type="GeneTree" id="ENSGT00390000006865"/>
<dbReference type="InParanoid" id="Q0MQB4"/>
<dbReference type="OrthoDB" id="5461at9604"/>
<dbReference type="Proteomes" id="UP000002277">
    <property type="component" value="Chromosome 12"/>
</dbReference>
<dbReference type="Bgee" id="ENSPTRG00000004557">
    <property type="expression patterns" value="Expressed in heart and 21 other cell types or tissues"/>
</dbReference>
<dbReference type="GO" id="GO:0005743">
    <property type="term" value="C:mitochondrial inner membrane"/>
    <property type="evidence" value="ECO:0007669"/>
    <property type="project" value="Ensembl"/>
</dbReference>
<dbReference type="GO" id="GO:0005759">
    <property type="term" value="C:mitochondrial matrix"/>
    <property type="evidence" value="ECO:0007669"/>
    <property type="project" value="UniProtKB-SubCell"/>
</dbReference>
<dbReference type="GO" id="GO:0005739">
    <property type="term" value="C:mitochondrion"/>
    <property type="evidence" value="ECO:0000318"/>
    <property type="project" value="GO_Central"/>
</dbReference>
<dbReference type="GO" id="GO:0045271">
    <property type="term" value="C:respiratory chain complex I"/>
    <property type="evidence" value="ECO:0000250"/>
    <property type="project" value="UniProtKB"/>
</dbReference>
<dbReference type="GO" id="GO:0003954">
    <property type="term" value="F:NADH dehydrogenase activity"/>
    <property type="evidence" value="ECO:0007669"/>
    <property type="project" value="Ensembl"/>
</dbReference>
<dbReference type="GO" id="GO:0044877">
    <property type="term" value="F:protein-containing complex binding"/>
    <property type="evidence" value="ECO:0000318"/>
    <property type="project" value="GO_Central"/>
</dbReference>
<dbReference type="GO" id="GO:0007623">
    <property type="term" value="P:circadian rhythm"/>
    <property type="evidence" value="ECO:0000250"/>
    <property type="project" value="UniProtKB"/>
</dbReference>
<dbReference type="GO" id="GO:0006744">
    <property type="term" value="P:ubiquinone biosynthetic process"/>
    <property type="evidence" value="ECO:0000318"/>
    <property type="project" value="GO_Central"/>
</dbReference>
<dbReference type="CDD" id="cd05271">
    <property type="entry name" value="NDUFA9_like_SDR_a"/>
    <property type="match status" value="1"/>
</dbReference>
<dbReference type="FunFam" id="3.40.50.720:FF:000246">
    <property type="entry name" value="NADH dehydrogenase [ubiquinone] 1 alpha subcomplex subunit 9, mitochondrial"/>
    <property type="match status" value="1"/>
</dbReference>
<dbReference type="Gene3D" id="3.40.50.720">
    <property type="entry name" value="NAD(P)-binding Rossmann-like Domain"/>
    <property type="match status" value="1"/>
</dbReference>
<dbReference type="InterPro" id="IPR051207">
    <property type="entry name" value="ComplexI_NDUFA9_subunit"/>
</dbReference>
<dbReference type="InterPro" id="IPR001509">
    <property type="entry name" value="Epimerase_deHydtase"/>
</dbReference>
<dbReference type="InterPro" id="IPR036291">
    <property type="entry name" value="NAD(P)-bd_dom_sf"/>
</dbReference>
<dbReference type="PANTHER" id="PTHR12126:SF10">
    <property type="entry name" value="NADH DEHYDROGENASE [UBIQUINONE] 1 ALPHA SUBCOMPLEX SUBUNIT 9, MITOCHONDRIAL"/>
    <property type="match status" value="1"/>
</dbReference>
<dbReference type="PANTHER" id="PTHR12126">
    <property type="entry name" value="NADH-UBIQUINONE OXIDOREDUCTASE 39 KDA SUBUNIT-RELATED"/>
    <property type="match status" value="1"/>
</dbReference>
<dbReference type="Pfam" id="PF01370">
    <property type="entry name" value="Epimerase"/>
    <property type="match status" value="1"/>
</dbReference>
<dbReference type="SUPFAM" id="SSF51735">
    <property type="entry name" value="NAD(P)-binding Rossmann-fold domains"/>
    <property type="match status" value="1"/>
</dbReference>
<reference key="1">
    <citation type="journal article" date="2006" name="Gene">
        <title>Adaptive selection of mitochondrial complex I subunits during primate radiation.</title>
        <authorList>
            <person name="Mishmar D."/>
            <person name="Ruiz-Pesini E."/>
            <person name="Mondragon-Palomino M."/>
            <person name="Procaccio V."/>
            <person name="Gaut B."/>
            <person name="Wallace D.C."/>
        </authorList>
    </citation>
    <scope>NUCLEOTIDE SEQUENCE [MRNA]</scope>
</reference>
<name>NDUA9_PANTR</name>
<proteinExistence type="evidence at transcript level"/>
<sequence>MAAAAQSRVVRVLSMSRSAITAIATSVCHGPPCRQLHHALMPHGKGGRSSVSGIVATVFGATGFLGRYVVNHLGRMGSQVIIPYRCDKYDIMHLRPMGDLGQLLFLEWDARDKDSIRRVVQHSNVVINLIGRDWETKNYDFEDVFVKIPQAIAQLSKEAGVEKFIHVSHLNANIKSSSRYLRNKAVGEKVVRDAFPEAIIIKPSDIFGREDRFLNSFASMHRFGPIPLGSLGWKTVKQPVYVVDVSKGIVNAVKDPDANGKSFAFVGPSRYLLFHLVKYIFAVAHRLFLPFPLPLFAYRWVARVFEISPFEPWITRDKVERMHITDMKLPHLPGLEDLGIQATPLELKAIEVLRRHRTYRWLSAEIEDVKPAKTVNI</sequence>
<accession>Q0MQB4</accession>
<evidence type="ECO:0000250" key="1"/>
<evidence type="ECO:0000250" key="2">
    <source>
        <dbReference type="UniProtKB" id="Q16795"/>
    </source>
</evidence>
<evidence type="ECO:0000250" key="3">
    <source>
        <dbReference type="UniProtKB" id="Q5BK63"/>
    </source>
</evidence>
<evidence type="ECO:0000250" key="4">
    <source>
        <dbReference type="UniProtKB" id="Q9DC69"/>
    </source>
</evidence>
<evidence type="ECO:0000305" key="5"/>
<protein>
    <recommendedName>
        <fullName>NADH dehydrogenase [ubiquinone] 1 alpha subcomplex subunit 9, mitochondrial</fullName>
    </recommendedName>
    <alternativeName>
        <fullName>Complex I-39kD</fullName>
        <shortName>CI-39kD</shortName>
    </alternativeName>
    <alternativeName>
        <fullName>NADH-ubiquinone oxidoreductase 39 kDa subunit</fullName>
    </alternativeName>
</protein>
<gene>
    <name type="primary">NDUFA9</name>
</gene>
<organism>
    <name type="scientific">Pan troglodytes</name>
    <name type="common">Chimpanzee</name>
    <dbReference type="NCBI Taxonomy" id="9598"/>
    <lineage>
        <taxon>Eukaryota</taxon>
        <taxon>Metazoa</taxon>
        <taxon>Chordata</taxon>
        <taxon>Craniata</taxon>
        <taxon>Vertebrata</taxon>
        <taxon>Euteleostomi</taxon>
        <taxon>Mammalia</taxon>
        <taxon>Eutheria</taxon>
        <taxon>Euarchontoglires</taxon>
        <taxon>Primates</taxon>
        <taxon>Haplorrhini</taxon>
        <taxon>Catarrhini</taxon>
        <taxon>Hominidae</taxon>
        <taxon>Pan</taxon>
    </lineage>
</organism>
<keyword id="KW-0007">Acetylation</keyword>
<keyword id="KW-0249">Electron transport</keyword>
<keyword id="KW-0274">FAD</keyword>
<keyword id="KW-0285">Flavoprotein</keyword>
<keyword id="KW-0496">Mitochondrion</keyword>
<keyword id="KW-1185">Reference proteome</keyword>
<keyword id="KW-0679">Respiratory chain</keyword>
<keyword id="KW-0809">Transit peptide</keyword>
<keyword id="KW-0813">Transport</keyword>